<sequence>MAKTSMVAKQQKKQKYAVREYTRCERCGRPHSVYRKFKLCRICFRELAYKGQIPGVRKASW</sequence>
<evidence type="ECO:0000255" key="1">
    <source>
        <dbReference type="HAMAP-Rule" id="MF_01364"/>
    </source>
</evidence>
<evidence type="ECO:0000305" key="2"/>
<protein>
    <recommendedName>
        <fullName evidence="1">Small ribosomal subunit protein uS14B</fullName>
    </recommendedName>
    <alternativeName>
        <fullName evidence="2">30S ribosomal protein S14 type Z</fullName>
    </alternativeName>
</protein>
<dbReference type="EMBL" id="AJ938182">
    <property type="protein sequence ID" value="CAI81798.1"/>
    <property type="status" value="ALT_INIT"/>
    <property type="molecule type" value="Genomic_DNA"/>
</dbReference>
<dbReference type="RefSeq" id="WP_001140799.1">
    <property type="nucleotide sequence ID" value="NC_007622.1"/>
</dbReference>
<dbReference type="PDB" id="6FXC">
    <property type="method" value="EM"/>
    <property type="resolution" value="6.76 A"/>
    <property type="chains" value="An/Bn=2-61"/>
</dbReference>
<dbReference type="PDBsum" id="6FXC"/>
<dbReference type="EMDB" id="EMD-3637"/>
<dbReference type="SMR" id="Q2YYL0"/>
<dbReference type="KEGG" id="sab:SAB2109c"/>
<dbReference type="HOGENOM" id="CLU_139869_3_0_9"/>
<dbReference type="GO" id="GO:0015935">
    <property type="term" value="C:small ribosomal subunit"/>
    <property type="evidence" value="ECO:0007669"/>
    <property type="project" value="TreeGrafter"/>
</dbReference>
<dbReference type="GO" id="GO:0019843">
    <property type="term" value="F:rRNA binding"/>
    <property type="evidence" value="ECO:0007669"/>
    <property type="project" value="UniProtKB-UniRule"/>
</dbReference>
<dbReference type="GO" id="GO:0003735">
    <property type="term" value="F:structural constituent of ribosome"/>
    <property type="evidence" value="ECO:0007669"/>
    <property type="project" value="InterPro"/>
</dbReference>
<dbReference type="GO" id="GO:0008270">
    <property type="term" value="F:zinc ion binding"/>
    <property type="evidence" value="ECO:0007669"/>
    <property type="project" value="UniProtKB-UniRule"/>
</dbReference>
<dbReference type="GO" id="GO:0006412">
    <property type="term" value="P:translation"/>
    <property type="evidence" value="ECO:0007669"/>
    <property type="project" value="UniProtKB-UniRule"/>
</dbReference>
<dbReference type="FunFam" id="4.10.830.10:FF:000001">
    <property type="entry name" value="30S ribosomal protein S14 type Z"/>
    <property type="match status" value="1"/>
</dbReference>
<dbReference type="Gene3D" id="4.10.830.10">
    <property type="entry name" value="30s Ribosomal Protein S14, Chain N"/>
    <property type="match status" value="1"/>
</dbReference>
<dbReference type="HAMAP" id="MF_01364_B">
    <property type="entry name" value="Ribosomal_uS14_2_B"/>
    <property type="match status" value="1"/>
</dbReference>
<dbReference type="InterPro" id="IPR001209">
    <property type="entry name" value="Ribosomal_uS14"/>
</dbReference>
<dbReference type="InterPro" id="IPR023053">
    <property type="entry name" value="Ribosomal_uS14_bact"/>
</dbReference>
<dbReference type="InterPro" id="IPR018271">
    <property type="entry name" value="Ribosomal_uS14_CS"/>
</dbReference>
<dbReference type="InterPro" id="IPR043140">
    <property type="entry name" value="Ribosomal_uS14_sf"/>
</dbReference>
<dbReference type="NCBIfam" id="NF005974">
    <property type="entry name" value="PRK08061.1"/>
    <property type="match status" value="1"/>
</dbReference>
<dbReference type="PANTHER" id="PTHR19836">
    <property type="entry name" value="30S RIBOSOMAL PROTEIN S14"/>
    <property type="match status" value="1"/>
</dbReference>
<dbReference type="PANTHER" id="PTHR19836:SF26">
    <property type="entry name" value="SMALL RIBOSOMAL SUBUNIT PROTEIN US14B"/>
    <property type="match status" value="1"/>
</dbReference>
<dbReference type="Pfam" id="PF00253">
    <property type="entry name" value="Ribosomal_S14"/>
    <property type="match status" value="1"/>
</dbReference>
<dbReference type="SUPFAM" id="SSF57716">
    <property type="entry name" value="Glucocorticoid receptor-like (DNA-binding domain)"/>
    <property type="match status" value="1"/>
</dbReference>
<dbReference type="PROSITE" id="PS00527">
    <property type="entry name" value="RIBOSOMAL_S14"/>
    <property type="match status" value="1"/>
</dbReference>
<reference key="1">
    <citation type="journal article" date="2007" name="PLoS ONE">
        <title>Molecular correlates of host specialization in Staphylococcus aureus.</title>
        <authorList>
            <person name="Herron-Olson L."/>
            <person name="Fitzgerald J.R."/>
            <person name="Musser J.M."/>
            <person name="Kapur V."/>
        </authorList>
    </citation>
    <scope>NUCLEOTIDE SEQUENCE [LARGE SCALE GENOMIC DNA]</scope>
    <source>
        <strain>bovine RF122 / ET3-1</strain>
    </source>
</reference>
<proteinExistence type="evidence at protein level"/>
<feature type="chain" id="PRO_0000269134" description="Small ribosomal subunit protein uS14B">
    <location>
        <begin position="1"/>
        <end position="61"/>
    </location>
</feature>
<feature type="binding site" evidence="1">
    <location>
        <position position="24"/>
    </location>
    <ligand>
        <name>Zn(2+)</name>
        <dbReference type="ChEBI" id="CHEBI:29105"/>
    </ligand>
</feature>
<feature type="binding site" evidence="1">
    <location>
        <position position="27"/>
    </location>
    <ligand>
        <name>Zn(2+)</name>
        <dbReference type="ChEBI" id="CHEBI:29105"/>
    </ligand>
</feature>
<feature type="binding site" evidence="1">
    <location>
        <position position="40"/>
    </location>
    <ligand>
        <name>Zn(2+)</name>
        <dbReference type="ChEBI" id="CHEBI:29105"/>
    </ligand>
</feature>
<feature type="binding site" evidence="1">
    <location>
        <position position="43"/>
    </location>
    <ligand>
        <name>Zn(2+)</name>
        <dbReference type="ChEBI" id="CHEBI:29105"/>
    </ligand>
</feature>
<accession>Q2YYL0</accession>
<keyword id="KW-0002">3D-structure</keyword>
<keyword id="KW-0479">Metal-binding</keyword>
<keyword id="KW-0687">Ribonucleoprotein</keyword>
<keyword id="KW-0689">Ribosomal protein</keyword>
<keyword id="KW-0694">RNA-binding</keyword>
<keyword id="KW-0699">rRNA-binding</keyword>
<keyword id="KW-0862">Zinc</keyword>
<gene>
    <name evidence="1" type="primary">rpsZ</name>
    <name evidence="1" type="synonym">rpsN1</name>
    <name type="ordered locus">SAB2109c</name>
</gene>
<name>RS14Z_STAAB</name>
<comment type="function">
    <text evidence="1">Binds 16S rRNA, required for the assembly of 30S particles and may also be responsible for determining the conformation of the 16S rRNA at the A site.</text>
</comment>
<comment type="cofactor">
    <cofactor evidence="1">
        <name>Zn(2+)</name>
        <dbReference type="ChEBI" id="CHEBI:29105"/>
    </cofactor>
    <text evidence="1">Binds 1 zinc ion per subunit.</text>
</comment>
<comment type="subunit">
    <text evidence="1">Part of the 30S ribosomal subunit. Contacts proteins S3 and S10.</text>
</comment>
<comment type="similarity">
    <text evidence="1">Belongs to the universal ribosomal protein uS14 family. Zinc-binding uS14 subfamily.</text>
</comment>
<comment type="sequence caution" evidence="2">
    <conflict type="erroneous initiation">
        <sequence resource="EMBL-CDS" id="CAI81798"/>
    </conflict>
    <text>Truncated N-terminus.</text>
</comment>
<organism>
    <name type="scientific">Staphylococcus aureus (strain bovine RF122 / ET3-1)</name>
    <dbReference type="NCBI Taxonomy" id="273036"/>
    <lineage>
        <taxon>Bacteria</taxon>
        <taxon>Bacillati</taxon>
        <taxon>Bacillota</taxon>
        <taxon>Bacilli</taxon>
        <taxon>Bacillales</taxon>
        <taxon>Staphylococcaceae</taxon>
        <taxon>Staphylococcus</taxon>
    </lineage>
</organism>